<name>COX2_PARDE</name>
<keyword id="KW-0002">3D-structure</keyword>
<keyword id="KW-0997">Cell inner membrane</keyword>
<keyword id="KW-1003">Cell membrane</keyword>
<keyword id="KW-0186">Copper</keyword>
<keyword id="KW-0903">Direct protein sequencing</keyword>
<keyword id="KW-0249">Electron transport</keyword>
<keyword id="KW-0472">Membrane</keyword>
<keyword id="KW-0479">Metal-binding</keyword>
<keyword id="KW-0873">Pyrrolidone carboxylic acid</keyword>
<keyword id="KW-0679">Respiratory chain</keyword>
<keyword id="KW-0732">Signal</keyword>
<keyword id="KW-1278">Translocase</keyword>
<keyword id="KW-0812">Transmembrane</keyword>
<keyword id="KW-1133">Transmembrane helix</keyword>
<keyword id="KW-0813">Transport</keyword>
<dbReference type="EC" id="7.1.1.9"/>
<dbReference type="EMBL" id="X05828">
    <property type="protein sequence ID" value="CAA29268.1"/>
    <property type="molecule type" value="Genomic_DNA"/>
</dbReference>
<dbReference type="PDB" id="1AR1">
    <property type="method" value="X-ray"/>
    <property type="resolution" value="2.70 A"/>
    <property type="chains" value="B=1-298"/>
</dbReference>
<dbReference type="PDB" id="1QLE">
    <property type="method" value="X-ray"/>
    <property type="resolution" value="3.00 A"/>
    <property type="chains" value="B=30-281"/>
</dbReference>
<dbReference type="PDB" id="3EHB">
    <property type="method" value="X-ray"/>
    <property type="resolution" value="2.32 A"/>
    <property type="chains" value="B=1-298"/>
</dbReference>
<dbReference type="PDB" id="3HB3">
    <property type="method" value="X-ray"/>
    <property type="resolution" value="2.25 A"/>
    <property type="chains" value="B=1-298"/>
</dbReference>
<dbReference type="PDB" id="7ATE">
    <property type="method" value="EM"/>
    <property type="resolution" value="2.40 A"/>
    <property type="chains" value="B=1-298"/>
</dbReference>
<dbReference type="PDB" id="7ATN">
    <property type="method" value="EM"/>
    <property type="resolution" value="2.66 A"/>
    <property type="chains" value="B=1-298"/>
</dbReference>
<dbReference type="PDB" id="7AU3">
    <property type="method" value="EM"/>
    <property type="resolution" value="2.56 A"/>
    <property type="chains" value="B=1-298"/>
</dbReference>
<dbReference type="PDB" id="7AU6">
    <property type="method" value="EM"/>
    <property type="resolution" value="2.40 A"/>
    <property type="chains" value="B=1-298"/>
</dbReference>
<dbReference type="PDBsum" id="1AR1"/>
<dbReference type="PDBsum" id="1QLE"/>
<dbReference type="PDBsum" id="3EHB"/>
<dbReference type="PDBsum" id="3HB3"/>
<dbReference type="PDBsum" id="7ATE"/>
<dbReference type="PDBsum" id="7ATN"/>
<dbReference type="PDBsum" id="7AU3"/>
<dbReference type="PDBsum" id="7AU6"/>
<dbReference type="EMDB" id="EMD-11921"/>
<dbReference type="EMDB" id="EMD-11922"/>
<dbReference type="EMDB" id="EMD-11924"/>
<dbReference type="EMDB" id="EMD-11925"/>
<dbReference type="SMR" id="P08306"/>
<dbReference type="DIP" id="DIP-6089N"/>
<dbReference type="IntAct" id="P08306">
    <property type="interactions" value="1"/>
</dbReference>
<dbReference type="DrugBank" id="DB04147">
    <property type="generic name" value="Dodecyldimethylamine N-oxide"/>
</dbReference>
<dbReference type="TCDB" id="3.D.4.6.1">
    <property type="family name" value="the proton-translocating cytochrome oxidase (cox) superfamily"/>
</dbReference>
<dbReference type="ABCD" id="P08306">
    <property type="antibodies" value="1 sequenced antibody"/>
</dbReference>
<dbReference type="OMA" id="WDFNYLD"/>
<dbReference type="BRENDA" id="7.1.1.9">
    <property type="organism ID" value="3341"/>
</dbReference>
<dbReference type="EvolutionaryTrace" id="P08306"/>
<dbReference type="GO" id="GO:0005886">
    <property type="term" value="C:plasma membrane"/>
    <property type="evidence" value="ECO:0007669"/>
    <property type="project" value="UniProtKB-SubCell"/>
</dbReference>
<dbReference type="GO" id="GO:0005507">
    <property type="term" value="F:copper ion binding"/>
    <property type="evidence" value="ECO:0007669"/>
    <property type="project" value="InterPro"/>
</dbReference>
<dbReference type="GO" id="GO:0004129">
    <property type="term" value="F:cytochrome-c oxidase activity"/>
    <property type="evidence" value="ECO:0007669"/>
    <property type="project" value="UniProtKB-EC"/>
</dbReference>
<dbReference type="GO" id="GO:0042773">
    <property type="term" value="P:ATP synthesis coupled electron transport"/>
    <property type="evidence" value="ECO:0007669"/>
    <property type="project" value="TreeGrafter"/>
</dbReference>
<dbReference type="Gene3D" id="1.10.287.90">
    <property type="match status" value="1"/>
</dbReference>
<dbReference type="Gene3D" id="2.60.40.420">
    <property type="entry name" value="Cupredoxins - blue copper proteins"/>
    <property type="match status" value="1"/>
</dbReference>
<dbReference type="InterPro" id="IPR045187">
    <property type="entry name" value="CcO_II"/>
</dbReference>
<dbReference type="InterPro" id="IPR002429">
    <property type="entry name" value="CcO_II-like_C"/>
</dbReference>
<dbReference type="InterPro" id="IPR001505">
    <property type="entry name" value="Copper_CuA"/>
</dbReference>
<dbReference type="InterPro" id="IPR008972">
    <property type="entry name" value="Cupredoxin"/>
</dbReference>
<dbReference type="InterPro" id="IPR014222">
    <property type="entry name" value="Cyt_c_oxidase_su2"/>
</dbReference>
<dbReference type="InterPro" id="IPR011759">
    <property type="entry name" value="Cyt_c_oxidase_su2_TM_dom"/>
</dbReference>
<dbReference type="InterPro" id="IPR036257">
    <property type="entry name" value="Cyt_c_oxidase_su2_TM_sf"/>
</dbReference>
<dbReference type="NCBIfam" id="TIGR02866">
    <property type="entry name" value="CoxB"/>
    <property type="match status" value="1"/>
</dbReference>
<dbReference type="PANTHER" id="PTHR22888:SF9">
    <property type="entry name" value="CYTOCHROME C OXIDASE SUBUNIT 2"/>
    <property type="match status" value="1"/>
</dbReference>
<dbReference type="PANTHER" id="PTHR22888">
    <property type="entry name" value="CYTOCHROME C OXIDASE, SUBUNIT II"/>
    <property type="match status" value="1"/>
</dbReference>
<dbReference type="Pfam" id="PF00116">
    <property type="entry name" value="COX2"/>
    <property type="match status" value="1"/>
</dbReference>
<dbReference type="Pfam" id="PF02790">
    <property type="entry name" value="COX2_TM"/>
    <property type="match status" value="1"/>
</dbReference>
<dbReference type="PRINTS" id="PR01166">
    <property type="entry name" value="CYCOXIDASEII"/>
</dbReference>
<dbReference type="SUPFAM" id="SSF49503">
    <property type="entry name" value="Cupredoxins"/>
    <property type="match status" value="1"/>
</dbReference>
<dbReference type="SUPFAM" id="SSF81464">
    <property type="entry name" value="Cytochrome c oxidase subunit II-like, transmembrane region"/>
    <property type="match status" value="1"/>
</dbReference>
<dbReference type="PROSITE" id="PS00078">
    <property type="entry name" value="COX2"/>
    <property type="match status" value="1"/>
</dbReference>
<dbReference type="PROSITE" id="PS50857">
    <property type="entry name" value="COX2_CUA"/>
    <property type="match status" value="1"/>
</dbReference>
<dbReference type="PROSITE" id="PS50999">
    <property type="entry name" value="COX2_TM"/>
    <property type="match status" value="1"/>
</dbReference>
<gene>
    <name type="primary">ctaC</name>
    <name type="synonym">coiI</name>
    <name type="synonym">ctaB</name>
</gene>
<comment type="function">
    <text>Subunits I and II form the functional core of the enzyme complex. Electrons originating in cytochrome c are transferred via heme a and Cu(A) to the binuclear center formed by heme a3 and Cu(B).</text>
</comment>
<comment type="catalytic activity">
    <reaction>
        <text>4 Fe(II)-[cytochrome c] + O2 + 8 H(+)(in) = 4 Fe(III)-[cytochrome c] + 2 H2O + 4 H(+)(out)</text>
        <dbReference type="Rhea" id="RHEA:11436"/>
        <dbReference type="Rhea" id="RHEA-COMP:10350"/>
        <dbReference type="Rhea" id="RHEA-COMP:14399"/>
        <dbReference type="ChEBI" id="CHEBI:15377"/>
        <dbReference type="ChEBI" id="CHEBI:15378"/>
        <dbReference type="ChEBI" id="CHEBI:15379"/>
        <dbReference type="ChEBI" id="CHEBI:29033"/>
        <dbReference type="ChEBI" id="CHEBI:29034"/>
        <dbReference type="EC" id="7.1.1.9"/>
    </reaction>
</comment>
<comment type="cofactor">
    <cofactor>
        <name>binuclear copper center (CuA)</name>
        <dbReference type="ChEBI" id="CHEBI:47357"/>
    </cofactor>
    <text>Binds a binuclear copper A center per subunit.</text>
</comment>
<comment type="subcellular location">
    <subcellularLocation>
        <location>Cell inner membrane</location>
        <topology>Multi-pass membrane protein</topology>
    </subcellularLocation>
</comment>
<comment type="similarity">
    <text evidence="2">Belongs to the cytochrome c oxidase subunit 2 family.</text>
</comment>
<feature type="signal peptide">
    <location>
        <begin position="1"/>
        <end position="29"/>
    </location>
</feature>
<feature type="chain" id="PRO_0000006059" description="Cytochrome c oxidase subunit 2">
    <location>
        <begin position="30"/>
        <end position="280"/>
    </location>
</feature>
<feature type="propeptide" id="PRO_0000006060" description="C-terminal propeptide">
    <location>
        <begin position="281"/>
        <end position="298"/>
    </location>
</feature>
<feature type="topological domain" description="Periplasmic">
    <location>
        <begin position="30"/>
        <end position="55"/>
    </location>
</feature>
<feature type="transmembrane region" description="Helical">
    <location>
        <begin position="56"/>
        <end position="88"/>
    </location>
</feature>
<feature type="topological domain" description="Cytoplasmic">
    <location>
        <begin position="89"/>
        <end position="103"/>
    </location>
</feature>
<feature type="transmembrane region" description="Helical">
    <location>
        <begin position="104"/>
        <end position="134"/>
    </location>
</feature>
<feature type="topological domain" description="Periplasmic">
    <location>
        <begin position="135"/>
        <end position="280"/>
    </location>
</feature>
<feature type="binding site">
    <location>
        <position position="210"/>
    </location>
    <ligand>
        <name>Cu cation</name>
        <dbReference type="ChEBI" id="CHEBI:23378"/>
        <label>A1</label>
    </ligand>
</feature>
<feature type="binding site">
    <location>
        <position position="245"/>
    </location>
    <ligand>
        <name>Cu cation</name>
        <dbReference type="ChEBI" id="CHEBI:23378"/>
        <label>A1</label>
    </ligand>
</feature>
<feature type="binding site">
    <location>
        <position position="245"/>
    </location>
    <ligand>
        <name>Cu cation</name>
        <dbReference type="ChEBI" id="CHEBI:23378"/>
        <label>A2</label>
    </ligand>
</feature>
<feature type="binding site">
    <location>
        <position position="247"/>
    </location>
    <ligand>
        <name>Cu cation</name>
        <dbReference type="ChEBI" id="CHEBI:23378"/>
        <label>A2</label>
    </ligand>
</feature>
<feature type="binding site">
    <location>
        <position position="249"/>
    </location>
    <ligand>
        <name>Cu cation</name>
        <dbReference type="ChEBI" id="CHEBI:23378"/>
        <label>A1</label>
    </ligand>
</feature>
<feature type="binding site">
    <location>
        <position position="249"/>
    </location>
    <ligand>
        <name>Cu cation</name>
        <dbReference type="ChEBI" id="CHEBI:23378"/>
        <label>A2</label>
    </ligand>
</feature>
<feature type="binding site">
    <location>
        <position position="253"/>
    </location>
    <ligand>
        <name>Cu cation</name>
        <dbReference type="ChEBI" id="CHEBI:23378"/>
        <label>A2</label>
    </ligand>
</feature>
<feature type="binding site">
    <location>
        <position position="256"/>
    </location>
    <ligand>
        <name>Cu cation</name>
        <dbReference type="ChEBI" id="CHEBI:23378"/>
        <label>A1</label>
    </ligand>
</feature>
<feature type="modified residue" description="Pyrrolidone carboxylic acid" evidence="1">
    <location>
        <position position="30"/>
    </location>
</feature>
<feature type="sequence conflict" description="In Ref. 2; AA sequence." evidence="2" ref="2">
    <original>GV</original>
    <variation>AF</variation>
    <location>
        <begin position="160"/>
        <end position="161"/>
    </location>
</feature>
<feature type="turn" evidence="3">
    <location>
        <begin position="32"/>
        <end position="35"/>
    </location>
</feature>
<feature type="strand" evidence="4">
    <location>
        <begin position="38"/>
        <end position="40"/>
    </location>
</feature>
<feature type="helix" evidence="4">
    <location>
        <begin position="55"/>
        <end position="88"/>
    </location>
</feature>
<feature type="turn" evidence="4">
    <location>
        <begin position="91"/>
        <end position="93"/>
    </location>
</feature>
<feature type="strand" evidence="4">
    <location>
        <begin position="94"/>
        <end position="96"/>
    </location>
</feature>
<feature type="helix" evidence="4">
    <location>
        <begin position="104"/>
        <end position="133"/>
    </location>
</feature>
<feature type="strand" evidence="4">
    <location>
        <begin position="140"/>
        <end position="148"/>
    </location>
</feature>
<feature type="strand" evidence="4">
    <location>
        <begin position="151"/>
        <end position="156"/>
    </location>
</feature>
<feature type="turn" evidence="4">
    <location>
        <begin position="157"/>
        <end position="160"/>
    </location>
</feature>
<feature type="strand" evidence="4">
    <location>
        <begin position="161"/>
        <end position="165"/>
    </location>
</feature>
<feature type="helix" evidence="4">
    <location>
        <begin position="170"/>
        <end position="172"/>
    </location>
</feature>
<feature type="helix" evidence="4">
    <location>
        <begin position="174"/>
        <end position="176"/>
    </location>
</feature>
<feature type="helix" evidence="4">
    <location>
        <begin position="180"/>
        <end position="182"/>
    </location>
</feature>
<feature type="turn" evidence="4">
    <location>
        <begin position="183"/>
        <end position="185"/>
    </location>
</feature>
<feature type="strand" evidence="4">
    <location>
        <begin position="187"/>
        <end position="189"/>
    </location>
</feature>
<feature type="strand" evidence="4">
    <location>
        <begin position="191"/>
        <end position="208"/>
    </location>
</feature>
<feature type="strand" evidence="4">
    <location>
        <begin position="210"/>
        <end position="214"/>
    </location>
</feature>
<feature type="helix" evidence="4">
    <location>
        <begin position="215"/>
        <end position="217"/>
    </location>
</feature>
<feature type="strand" evidence="4">
    <location>
        <begin position="219"/>
        <end position="223"/>
    </location>
</feature>
<feature type="strand" evidence="4">
    <location>
        <begin position="229"/>
        <end position="234"/>
    </location>
</feature>
<feature type="strand" evidence="4">
    <location>
        <begin position="236"/>
        <end position="243"/>
    </location>
</feature>
<feature type="turn" evidence="4">
    <location>
        <begin position="251"/>
        <end position="254"/>
    </location>
</feature>
<feature type="strand" evidence="4">
    <location>
        <begin position="258"/>
        <end position="263"/>
    </location>
</feature>
<feature type="helix" evidence="4">
    <location>
        <begin position="265"/>
        <end position="278"/>
    </location>
</feature>
<organism>
    <name type="scientific">Paracoccus denitrificans</name>
    <dbReference type="NCBI Taxonomy" id="266"/>
    <lineage>
        <taxon>Bacteria</taxon>
        <taxon>Pseudomonadati</taxon>
        <taxon>Pseudomonadota</taxon>
        <taxon>Alphaproteobacteria</taxon>
        <taxon>Rhodobacterales</taxon>
        <taxon>Paracoccaceae</taxon>
        <taxon>Paracoccus</taxon>
    </lineage>
</organism>
<proteinExistence type="evidence at protein level"/>
<protein>
    <recommendedName>
        <fullName>Cytochrome c oxidase subunit 2</fullName>
        <ecNumber>7.1.1.9</ecNumber>
    </recommendedName>
    <alternativeName>
        <fullName>Cytochrome aa3 subunit 2</fullName>
    </alternativeName>
    <alternativeName>
        <fullName>Cytochrome c oxidase polypeptide II</fullName>
    </alternativeName>
    <alternativeName>
        <fullName>Oxidase aa(3) subunit 2</fullName>
    </alternativeName>
</protein>
<sequence>MMAIATKRRGVAAVMSLGVATMTAVPALAQDVLGDLPVIGKPVNGGMNFQPASSPLAHDQQWLDHFVLYIITAVTIFVCLLLLICIVRFNRRANPVPARFTHNTPIEVIWTLVPVLILVAIGAFSLPILFRSQEMPNDPDLVIKAIGHQWYWSYEYPNDGVAFDALMLEKEALADAGYSEDEYLLATDNPVVVPVGKKVLVQVTATDVIHAWTIPAFAVKQDAVPGRIAQLWFSVDQEGVYFGQCSELCGINHAYMPIVVKAVSQEKYEAWLAGAKEEFAADASDYLPASPVKLASAE</sequence>
<evidence type="ECO:0000269" key="1">
    <source>
    </source>
</evidence>
<evidence type="ECO:0000305" key="2"/>
<evidence type="ECO:0007829" key="3">
    <source>
        <dbReference type="PDB" id="3EHB"/>
    </source>
</evidence>
<evidence type="ECO:0007829" key="4">
    <source>
        <dbReference type="PDB" id="3HB3"/>
    </source>
</evidence>
<reference key="1">
    <citation type="journal article" date="1987" name="EMBO J.">
        <title>Isolation and analysis of the genes for cytochrome c oxidase in Paracoccus denitrificans.</title>
        <authorList>
            <person name="Raitio M."/>
            <person name="Jalli T."/>
            <person name="Saraste M."/>
        </authorList>
    </citation>
    <scope>NUCLEOTIDE SEQUENCE [GENOMIC DNA]</scope>
    <source>
        <strain>S1657</strain>
    </source>
</reference>
<reference key="2">
    <citation type="journal article" date="1987" name="Eur. J. Biochem.">
        <title>Subunit II of cytochrome c oxidase from Paracoccus denitrificans. DNA sequence, gene expression and the protein.</title>
        <authorList>
            <person name="Steinruecke P."/>
            <person name="Steffens G.C.M."/>
            <person name="Panskus G."/>
            <person name="Buse G."/>
            <person name="Ludwig B."/>
        </authorList>
    </citation>
    <scope>NUCLEOTIDE SEQUENCE [GENOMIC DNA]</scope>
    <scope>PARTIAL PROTEIN SEQUENCE</scope>
    <scope>PYROGLUTAMATE FORMATION AT GLN-30</scope>
    <source>
        <strain>ATCC 13543 / NRRL B-3784 / NRC 449</strain>
    </source>
</reference>
<reference key="3">
    <citation type="journal article" date="1995" name="Nature">
        <title>Structure at 2.8-A resolution of cytochrome c oxidase from Paracoccus denitrificans.</title>
        <authorList>
            <person name="Iwata S."/>
            <person name="Ostermeier C."/>
            <person name="Ludwig B."/>
            <person name="Michel H."/>
        </authorList>
    </citation>
    <scope>X-RAY CRYSTALLOGRAPHY (2.8 ANGSTROMS)</scope>
</reference>
<reference key="4">
    <citation type="journal article" date="1997" name="Proc. Natl. Acad. Sci. U.S.A.">
        <title>Structure at 2.7-A resolution of the Paracoccus denitrificans two-subunit cytochrome c oxidase complexed with an antibody FV fragment.</title>
        <authorList>
            <person name="Ostermeier C."/>
            <person name="Harrenga A."/>
            <person name="Ermler U."/>
            <person name="Michel H."/>
        </authorList>
    </citation>
    <scope>X-RAY CRYSTALLOGRAPHY (2.7 ANGSTROMS)</scope>
</reference>
<accession>P08306</accession>